<reference key="1">
    <citation type="journal article" date="2001" name="Plant Mol. Biol.">
        <title>The plastid chromosome of spinach (Spinacia oleracea): complete nucleotide sequence and gene organization.</title>
        <authorList>
            <person name="Schmitz-Linneweber C."/>
            <person name="Maier R.M."/>
            <person name="Alcaraz J.-P."/>
            <person name="Cottet A."/>
            <person name="Herrmann R.G."/>
            <person name="Mache R."/>
        </authorList>
    </citation>
    <scope>NUCLEOTIDE SEQUENCE [LARGE SCALE GENOMIC DNA]</scope>
    <source>
        <strain>cv. Geant d'hiver</strain>
        <strain>cv. Monatol</strain>
    </source>
</reference>
<reference key="2">
    <citation type="journal article" date="1992" name="Plant Mol. Biol.">
        <title>Purification and characterization of seven chloroplast ribosomal proteins: evidence that organelle ribosomal protein genes are functional and that NH2-terminal processing occurs via multiple pathways in chloroplasts.</title>
        <authorList>
            <person name="Schmidt J."/>
            <person name="Herfurth E."/>
            <person name="Subramanian A.R."/>
        </authorList>
    </citation>
    <scope>PROTEIN SEQUENCE OF 2-32</scope>
    <source>
        <strain>cv. Alwaro</strain>
    </source>
</reference>
<reference key="3">
    <citation type="journal article" date="2000" name="J. Biol. Chem.">
        <title>The plastid ribosomal proteins. Identification of all the proteins in the 30S subunit of an organelle ribosome (chloroplast).</title>
        <authorList>
            <person name="Yamaguchi K."/>
            <person name="von Knoblauch K."/>
            <person name="Subramanian A.R."/>
        </authorList>
    </citation>
    <scope>PROTEIN SEQUENCE OF 2-15</scope>
    <scope>SUBUNIT</scope>
    <scope>SUBCELLULAR LOCATION</scope>
    <scope>MASS SPECTROMETRY</scope>
    <source>
        <strain>cv. Alwaro</strain>
        <tissue>Leaf</tissue>
    </source>
</reference>
<reference key="4">
    <citation type="journal article" date="2007" name="Proc. Natl. Acad. Sci. U.S.A.">
        <title>Cryo-EM study of the spinach chloroplast ribosome reveals the structural and functional roles of plastid-specific ribosomal proteins.</title>
        <authorList>
            <person name="Sharma M.R."/>
            <person name="Wilson D.N."/>
            <person name="Datta P.P."/>
            <person name="Barat C."/>
            <person name="Schluenzen F."/>
            <person name="Fucini P."/>
            <person name="Agrawal R.K."/>
        </authorList>
    </citation>
    <scope>STRUCTURE BY ELECTRON MICROSCOPY (9.4 ANGSTROMS)</scope>
    <scope>INTERACTION WITH S21</scope>
</reference>
<reference key="5">
    <citation type="journal article" date="2017" name="EMBO J.">
        <title>The complete structure of the chloroplast 70S ribosome in complex with translation factor pY.</title>
        <authorList>
            <person name="Bieri P."/>
            <person name="Leibundgut M."/>
            <person name="Saurer M."/>
            <person name="Boehringer D."/>
            <person name="Ban N."/>
        </authorList>
    </citation>
    <scope>STRUCTURE BY ELECTRON MICROSCOPY (3.40 ANGSTROMS)</scope>
    <scope>SUBUNIT</scope>
    <scope>SUBCELLULAR LOCATION</scope>
</reference>
<organism>
    <name type="scientific">Spinacia oleracea</name>
    <name type="common">Spinach</name>
    <dbReference type="NCBI Taxonomy" id="3562"/>
    <lineage>
        <taxon>Eukaryota</taxon>
        <taxon>Viridiplantae</taxon>
        <taxon>Streptophyta</taxon>
        <taxon>Embryophyta</taxon>
        <taxon>Tracheophyta</taxon>
        <taxon>Spermatophyta</taxon>
        <taxon>Magnoliopsida</taxon>
        <taxon>eudicotyledons</taxon>
        <taxon>Gunneridae</taxon>
        <taxon>Pentapetalae</taxon>
        <taxon>Caryophyllales</taxon>
        <taxon>Chenopodiaceae</taxon>
        <taxon>Chenopodioideae</taxon>
        <taxon>Anserineae</taxon>
        <taxon>Spinacia</taxon>
    </lineage>
</organism>
<keyword id="KW-0002">3D-structure</keyword>
<keyword id="KW-0150">Chloroplast</keyword>
<keyword id="KW-0903">Direct protein sequencing</keyword>
<keyword id="KW-0934">Plastid</keyword>
<keyword id="KW-1185">Reference proteome</keyword>
<keyword id="KW-0687">Ribonucleoprotein</keyword>
<keyword id="KW-0689">Ribosomal protein</keyword>
<keyword id="KW-0694">RNA-binding</keyword>
<keyword id="KW-0699">rRNA-binding</keyword>
<feature type="initiator methionine" description="Removed" evidence="1 2">
    <location>
        <position position="1"/>
    </location>
</feature>
<feature type="chain" id="PRO_0000146429" description="Small ribosomal subunit protein uS12cz/uS12cy">
    <location>
        <begin position="2"/>
        <end position="123"/>
    </location>
</feature>
<comment type="function">
    <text evidence="7 8">Component of the chloroplast ribosome (chloro-ribosome), a dedicated translation machinery responsible for the synthesis of chloroplast genome-encoded proteins, including proteins of the transcription and translation machinery and components of the photosynthetic apparatus.</text>
</comment>
<comment type="subunit">
    <text evidence="1 3">Component of the chloroplast small ribosomal subunit (SSU). Mature 70S chloroplast ribosomes of higher plants consist of a small (30S) and a large (50S) subunit. The 30S small subunit contains 1 molecule of ribosomal RNA (16S rRNA) and 24 different proteins. The 50S large subunit contains 3 rRNA molecules (23S, 5S and 4.5S rRNA) and 33 different proteins.</text>
</comment>
<comment type="subcellular location">
    <subcellularLocation>
        <location evidence="1 3">Plastid</location>
        <location evidence="1 3">Chloroplast</location>
    </subcellularLocation>
</comment>
<comment type="mass spectrometry" mass="13786.0" method="Electrospray" evidence="1"/>
<comment type="mass spectrometry" mass="13779.0" method="MALDI" evidence="1"/>
<comment type="miscellaneous">
    <text>Exons 2 and 3 are cis-spliced, while a trans-splicing reaction is required to link exons 1 and 2.</text>
</comment>
<comment type="similarity">
    <text evidence="6">Belongs to the universal ribosomal protein uS12 family.</text>
</comment>
<accession>P62128</accession>
<accession>P06369</accession>
<accession>P28806</accession>
<accession>P56803</accession>
<accession>Q9XQZ8</accession>
<evidence type="ECO:0000269" key="1">
    <source>
    </source>
</evidence>
<evidence type="ECO:0000269" key="2">
    <source>
    </source>
</evidence>
<evidence type="ECO:0000269" key="3">
    <source>
    </source>
</evidence>
<evidence type="ECO:0000303" key="4">
    <source>
    </source>
</evidence>
<evidence type="ECO:0000303" key="5">
    <source>
    </source>
</evidence>
<evidence type="ECO:0000305" key="6"/>
<evidence type="ECO:0000305" key="7">
    <source>
    </source>
</evidence>
<evidence type="ECO:0000305" key="8">
    <source>
    </source>
</evidence>
<geneLocation type="chloroplast"/>
<sequence length="123" mass="13764">MPTIKQLIRNTRQPIRNVTKSPALRGCPQRRGTCTRVYTITPKKPNSALRKVARVRLTSGFEITAYIPGIGHNLQEHSVVLVRGGRVKDLPGVRYHIVRGTLDAVGVKDRQQGRSKYGVKKPK</sequence>
<protein>
    <recommendedName>
        <fullName evidence="5">Small ribosomal subunit protein uS12cz/uS12cy</fullName>
    </recommendedName>
    <alternativeName>
        <fullName evidence="4">30S ribosomal protein S12, chloroplastic</fullName>
    </alternativeName>
</protein>
<dbReference type="EMBL" id="AJ400848">
    <property type="protein sequence ID" value="CAB88774.1"/>
    <property type="molecule type" value="Genomic_DNA"/>
</dbReference>
<dbReference type="EMBL" id="AJ400848">
    <property type="protein sequence ID" value="CAB88797.1"/>
    <property type="molecule type" value="Genomic_DNA"/>
</dbReference>
<dbReference type="PIR" id="S26232">
    <property type="entry name" value="S26232"/>
</dbReference>
<dbReference type="PDB" id="4V61">
    <property type="method" value="EM"/>
    <property type="resolution" value="9.40 A"/>
    <property type="chains" value="AL=1-123"/>
</dbReference>
<dbReference type="PDB" id="5MMJ">
    <property type="method" value="EM"/>
    <property type="resolution" value="3.65 A"/>
    <property type="chains" value="l=1-123"/>
</dbReference>
<dbReference type="PDB" id="5MMM">
    <property type="method" value="EM"/>
    <property type="resolution" value="3.40 A"/>
    <property type="chains" value="l=1-123"/>
</dbReference>
<dbReference type="PDB" id="5X8P">
    <property type="method" value="EM"/>
    <property type="resolution" value="3.40 A"/>
    <property type="chains" value="l=1-123"/>
</dbReference>
<dbReference type="PDB" id="5X8R">
    <property type="method" value="EM"/>
    <property type="resolution" value="3.70 A"/>
    <property type="chains" value="l=1-123"/>
</dbReference>
<dbReference type="PDB" id="6ERI">
    <property type="method" value="EM"/>
    <property type="resolution" value="3.00 A"/>
    <property type="chains" value="BL=2-123"/>
</dbReference>
<dbReference type="PDBsum" id="4V61"/>
<dbReference type="PDBsum" id="5MMJ"/>
<dbReference type="PDBsum" id="5MMM"/>
<dbReference type="PDBsum" id="5X8P"/>
<dbReference type="PDBsum" id="5X8R"/>
<dbReference type="PDBsum" id="6ERI"/>
<dbReference type="EMDB" id="EMD-3532"/>
<dbReference type="EMDB" id="EMD-3533"/>
<dbReference type="EMDB" id="EMD-3941"/>
<dbReference type="EMDB" id="EMD-6709"/>
<dbReference type="EMDB" id="EMD-6710"/>
<dbReference type="SMR" id="P62128"/>
<dbReference type="FunCoup" id="P62128">
    <property type="interactions" value="1510"/>
</dbReference>
<dbReference type="STRING" id="3562.P62128"/>
<dbReference type="KEGG" id="soe:2715636"/>
<dbReference type="KEGG" id="soe:2715700"/>
<dbReference type="InParanoid" id="P62128"/>
<dbReference type="OrthoDB" id="414309at2759"/>
<dbReference type="Proteomes" id="UP001155700">
    <property type="component" value="Unplaced"/>
</dbReference>
<dbReference type="GO" id="GO:0009507">
    <property type="term" value="C:chloroplast"/>
    <property type="evidence" value="ECO:0007669"/>
    <property type="project" value="UniProtKB-SubCell"/>
</dbReference>
<dbReference type="GO" id="GO:0005840">
    <property type="term" value="C:ribosome"/>
    <property type="evidence" value="ECO:0000318"/>
    <property type="project" value="GO_Central"/>
</dbReference>
<dbReference type="GO" id="GO:0015935">
    <property type="term" value="C:small ribosomal subunit"/>
    <property type="evidence" value="ECO:0007669"/>
    <property type="project" value="InterPro"/>
</dbReference>
<dbReference type="GO" id="GO:0019843">
    <property type="term" value="F:rRNA binding"/>
    <property type="evidence" value="ECO:0007669"/>
    <property type="project" value="UniProtKB-UniRule"/>
</dbReference>
<dbReference type="GO" id="GO:0003735">
    <property type="term" value="F:structural constituent of ribosome"/>
    <property type="evidence" value="ECO:0000318"/>
    <property type="project" value="GO_Central"/>
</dbReference>
<dbReference type="GO" id="GO:0006412">
    <property type="term" value="P:translation"/>
    <property type="evidence" value="ECO:0000318"/>
    <property type="project" value="GO_Central"/>
</dbReference>
<dbReference type="CDD" id="cd03368">
    <property type="entry name" value="Ribosomal_S12"/>
    <property type="match status" value="1"/>
</dbReference>
<dbReference type="FunFam" id="2.40.50.140:FF:000008">
    <property type="entry name" value="30S ribosomal protein S12, chloroplastic"/>
    <property type="match status" value="1"/>
</dbReference>
<dbReference type="Gene3D" id="2.40.50.140">
    <property type="entry name" value="Nucleic acid-binding proteins"/>
    <property type="match status" value="1"/>
</dbReference>
<dbReference type="HAMAP" id="MF_00403_B">
    <property type="entry name" value="Ribosomal_uS12_B"/>
    <property type="match status" value="1"/>
</dbReference>
<dbReference type="InterPro" id="IPR012340">
    <property type="entry name" value="NA-bd_OB-fold"/>
</dbReference>
<dbReference type="InterPro" id="IPR006032">
    <property type="entry name" value="Ribosomal_uS12"/>
</dbReference>
<dbReference type="InterPro" id="IPR005679">
    <property type="entry name" value="Ribosomal_uS12_bac"/>
</dbReference>
<dbReference type="NCBIfam" id="TIGR00981">
    <property type="entry name" value="rpsL_bact"/>
    <property type="match status" value="1"/>
</dbReference>
<dbReference type="PANTHER" id="PTHR11652">
    <property type="entry name" value="30S RIBOSOMAL PROTEIN S12 FAMILY MEMBER"/>
    <property type="match status" value="1"/>
</dbReference>
<dbReference type="Pfam" id="PF00164">
    <property type="entry name" value="Ribosom_S12_S23"/>
    <property type="match status" value="1"/>
</dbReference>
<dbReference type="PIRSF" id="PIRSF002133">
    <property type="entry name" value="Ribosomal_S12/S23"/>
    <property type="match status" value="1"/>
</dbReference>
<dbReference type="PRINTS" id="PR01034">
    <property type="entry name" value="RIBOSOMALS12"/>
</dbReference>
<dbReference type="SUPFAM" id="SSF50249">
    <property type="entry name" value="Nucleic acid-binding proteins"/>
    <property type="match status" value="1"/>
</dbReference>
<dbReference type="PROSITE" id="PS00055">
    <property type="entry name" value="RIBOSOMAL_S12"/>
    <property type="match status" value="1"/>
</dbReference>
<name>RR12_SPIOL</name>
<gene>
    <name type="primary">rps12-A</name>
</gene>
<gene>
    <name type="primary">rps12-B</name>
</gene>
<proteinExistence type="evidence at protein level"/>